<name>TYDC2_NARPS</name>
<accession>A0A2H5AIY2</accession>
<protein>
    <recommendedName>
        <fullName evidence="4">Tyrosine decarboxylase 2</fullName>
        <ecNumber evidence="6">4.1.1.25</ecNumber>
    </recommendedName>
</protein>
<evidence type="ECO:0000250" key="1">
    <source>
        <dbReference type="UniProtKB" id="P20711"/>
    </source>
</evidence>
<evidence type="ECO:0000250" key="2">
    <source>
        <dbReference type="UniProtKB" id="P80041"/>
    </source>
</evidence>
<evidence type="ECO:0000269" key="3">
    <source>
    </source>
</evidence>
<evidence type="ECO:0000303" key="4">
    <source>
    </source>
</evidence>
<evidence type="ECO:0000305" key="5"/>
<evidence type="ECO:0000305" key="6">
    <source>
    </source>
</evidence>
<gene>
    <name evidence="4" type="primary">TYDC2</name>
</gene>
<proteinExistence type="evidence at transcript level"/>
<comment type="function">
    <text evidence="4">Catalyzes the decarboxylation of L-tyrosine to tyramine, which is converted to norbelladine, a precursor to all Amaryllidaceae alkaloids such as galanthamine, lycorine and haemanthamine, and including haemanthamine- and crinamine-type alkaloids, promising anticancer agents.</text>
</comment>
<comment type="catalytic activity">
    <reaction evidence="6">
        <text>L-tyrosine + H(+) = tyramine + CO2</text>
        <dbReference type="Rhea" id="RHEA:14345"/>
        <dbReference type="ChEBI" id="CHEBI:15378"/>
        <dbReference type="ChEBI" id="CHEBI:16526"/>
        <dbReference type="ChEBI" id="CHEBI:58315"/>
        <dbReference type="ChEBI" id="CHEBI:327995"/>
        <dbReference type="EC" id="4.1.1.25"/>
    </reaction>
</comment>
<comment type="cofactor">
    <cofactor evidence="1">
        <name>pyridoxal 5'-phosphate</name>
        <dbReference type="ChEBI" id="CHEBI:597326"/>
    </cofactor>
</comment>
<comment type="pathway">
    <text evidence="4">Alkaloid biosynthesis.</text>
</comment>
<comment type="tissue specificity">
    <text evidence="3">Mostly expressed in bulbs, and, to a lower extent, in stems, roots, leaves and flowers.</text>
</comment>
<comment type="similarity">
    <text evidence="5">Belongs to the group II decarboxylase family.</text>
</comment>
<sequence>MEESLKPMDAEQLRENAHKMVDFIADYYKSIESFPVLSQVKPGYLRDLLPDSAPDHPESLEDVLEDIRQKIVPGVTHWQSPNYFAYYPSNSSVAGFLGEMISAGFNIVGFNWIASPAATELEVIVLDWLAKMLNLPNQFLSSGQGGGVIQGTASEANLVVLLAARDKFLNRFGKRSLEKLVVYASDQTHAAMKKACQIAGIYPENFRVLNADHTSNYALVPEALSDAISNDLSAGLIPFFLCATVGTTSSAAVDPLSELGKISKVNDMWFHVDAAYAGSACICPEYRHYIDGIEEAASFNMNAHKWFLTNFDCSLLWIKDRSALIQSLSTYPEYLKNKASQENSVVDFKDWQIPLGRRFRSLKLWMVLRLYGLENLQSYIRNHIKLAGQFEQLVCSDSRFEVVVPRTFSLVCFRLLPPPNHQDNGYKLNHSLLDAVNSSGKIFVSHTVLSGKYVIRFAVGAPLTEEEHIKQAWKVFQDQATILLAGSDGSDFGASNGDII</sequence>
<reference key="1">
    <citation type="journal article" date="2017" name="Sci. Rep.">
        <title>Transcriptome and metabolome profiling of Narcissus pseudonarcissus 'King Alfred' reveal components of Amaryllidaceae alkaloid metabolism.</title>
        <authorList>
            <person name="Singh A."/>
            <person name="Desgagne-Penix I."/>
        </authorList>
    </citation>
    <scope>NUCLEOTIDE SEQUENCE [MRNA]</scope>
    <scope>FUNCTION</scope>
    <scope>REVIEW ON THE AMARYLLIDACEAE ALKALOID METABOLISM</scope>
    <scope>PATHWAY</scope>
    <scope>TISSUE SPECIFICITY</scope>
    <scope>GENE FAMILY</scope>
    <scope>NOMENCLATURE</scope>
    <source>
        <strain>cv. King Alfred</strain>
        <tissue>Bulb</tissue>
    </source>
</reference>
<keyword id="KW-0017">Alkaloid metabolism</keyword>
<keyword id="KW-0210">Decarboxylase</keyword>
<keyword id="KW-0456">Lyase</keyword>
<keyword id="KW-0663">Pyridoxal phosphate</keyword>
<keyword id="KW-0677">Repeat</keyword>
<dbReference type="EC" id="4.1.1.25" evidence="6"/>
<dbReference type="EMBL" id="MF405172">
    <property type="protein sequence ID" value="AUG71933.1"/>
    <property type="molecule type" value="mRNA"/>
</dbReference>
<dbReference type="SMR" id="A0A2H5AIY2"/>
<dbReference type="GO" id="GO:0005737">
    <property type="term" value="C:cytoplasm"/>
    <property type="evidence" value="ECO:0007669"/>
    <property type="project" value="TreeGrafter"/>
</dbReference>
<dbReference type="GO" id="GO:0030170">
    <property type="term" value="F:pyridoxal phosphate binding"/>
    <property type="evidence" value="ECO:0007669"/>
    <property type="project" value="InterPro"/>
</dbReference>
<dbReference type="GO" id="GO:0004837">
    <property type="term" value="F:tyrosine decarboxylase activity"/>
    <property type="evidence" value="ECO:0007669"/>
    <property type="project" value="UniProtKB-EC"/>
</dbReference>
<dbReference type="GO" id="GO:0009820">
    <property type="term" value="P:alkaloid metabolic process"/>
    <property type="evidence" value="ECO:0007669"/>
    <property type="project" value="UniProtKB-KW"/>
</dbReference>
<dbReference type="GO" id="GO:0006520">
    <property type="term" value="P:amino acid metabolic process"/>
    <property type="evidence" value="ECO:0007669"/>
    <property type="project" value="InterPro"/>
</dbReference>
<dbReference type="GO" id="GO:0019752">
    <property type="term" value="P:carboxylic acid metabolic process"/>
    <property type="evidence" value="ECO:0007669"/>
    <property type="project" value="InterPro"/>
</dbReference>
<dbReference type="CDD" id="cd06450">
    <property type="entry name" value="DOPA_deC_like"/>
    <property type="match status" value="1"/>
</dbReference>
<dbReference type="FunFam" id="1.20.1340.10:FF:000001">
    <property type="entry name" value="Histidine decarboxylase"/>
    <property type="match status" value="1"/>
</dbReference>
<dbReference type="FunFam" id="3.40.640.10:FF:000025">
    <property type="entry name" value="Histidine decarboxylase"/>
    <property type="match status" value="1"/>
</dbReference>
<dbReference type="Gene3D" id="3.90.1150.10">
    <property type="entry name" value="Aspartate Aminotransferase, domain 1"/>
    <property type="match status" value="1"/>
</dbReference>
<dbReference type="Gene3D" id="1.20.1340.10">
    <property type="entry name" value="dopa decarboxylase, N-terminal domain"/>
    <property type="match status" value="1"/>
</dbReference>
<dbReference type="Gene3D" id="3.40.640.10">
    <property type="entry name" value="Type I PLP-dependent aspartate aminotransferase-like (Major domain)"/>
    <property type="match status" value="1"/>
</dbReference>
<dbReference type="InterPro" id="IPR010977">
    <property type="entry name" value="Aromatic_deC"/>
</dbReference>
<dbReference type="InterPro" id="IPR002129">
    <property type="entry name" value="PyrdxlP-dep_de-COase"/>
</dbReference>
<dbReference type="InterPro" id="IPR015424">
    <property type="entry name" value="PyrdxlP-dep_Trfase"/>
</dbReference>
<dbReference type="InterPro" id="IPR015421">
    <property type="entry name" value="PyrdxlP-dep_Trfase_major"/>
</dbReference>
<dbReference type="InterPro" id="IPR015422">
    <property type="entry name" value="PyrdxlP-dep_Trfase_small"/>
</dbReference>
<dbReference type="InterPro" id="IPR021115">
    <property type="entry name" value="Pyridoxal-P_BS"/>
</dbReference>
<dbReference type="PANTHER" id="PTHR11999">
    <property type="entry name" value="GROUP II PYRIDOXAL-5-PHOSPHATE DECARBOXYLASE"/>
    <property type="match status" value="1"/>
</dbReference>
<dbReference type="PANTHER" id="PTHR11999:SF70">
    <property type="entry name" value="MIP05841P"/>
    <property type="match status" value="1"/>
</dbReference>
<dbReference type="Pfam" id="PF00282">
    <property type="entry name" value="Pyridoxal_deC"/>
    <property type="match status" value="1"/>
</dbReference>
<dbReference type="PRINTS" id="PR00800">
    <property type="entry name" value="YHDCRBOXLASE"/>
</dbReference>
<dbReference type="SUPFAM" id="SSF53383">
    <property type="entry name" value="PLP-dependent transferases"/>
    <property type="match status" value="1"/>
</dbReference>
<dbReference type="PROSITE" id="PS00392">
    <property type="entry name" value="DDC_GAD_HDC_YDC"/>
    <property type="match status" value="1"/>
</dbReference>
<feature type="chain" id="PRO_0000450639" description="Tyrosine decarboxylase 2">
    <location>
        <begin position="1"/>
        <end position="500"/>
    </location>
</feature>
<feature type="repeat" description="1" evidence="1">
    <location>
        <begin position="65"/>
        <end position="122"/>
    </location>
</feature>
<feature type="repeat" description="2" evidence="1">
    <location>
        <begin position="125"/>
        <end position="176"/>
    </location>
</feature>
<feature type="region of interest" description="2 X approximate tandem repeats" evidence="1">
    <location>
        <begin position="65"/>
        <end position="176"/>
    </location>
</feature>
<feature type="binding site" evidence="2">
    <location>
        <position position="89"/>
    </location>
    <ligand>
        <name>substrate</name>
    </ligand>
</feature>
<feature type="binding site" evidence="1">
    <location>
        <position position="153"/>
    </location>
    <ligand>
        <name>pyridoxal 5'-phosphate</name>
        <dbReference type="ChEBI" id="CHEBI:597326"/>
    </ligand>
</feature>
<feature type="binding site" evidence="1">
    <location>
        <position position="154"/>
    </location>
    <ligand>
        <name>pyridoxal 5'-phosphate</name>
        <dbReference type="ChEBI" id="CHEBI:597326"/>
    </ligand>
</feature>
<feature type="binding site" evidence="2">
    <location>
        <position position="189"/>
    </location>
    <ligand>
        <name>substrate</name>
    </ligand>
</feature>
<feature type="binding site" evidence="1">
    <location>
        <position position="248"/>
    </location>
    <ligand>
        <name>pyridoxal 5'-phosphate</name>
        <dbReference type="ChEBI" id="CHEBI:597326"/>
    </ligand>
</feature>
<feature type="binding site" evidence="1">
    <location>
        <position position="302"/>
    </location>
    <ligand>
        <name>pyridoxal 5'-phosphate</name>
        <dbReference type="ChEBI" id="CHEBI:597326"/>
    </ligand>
</feature>
<feature type="modified residue" description="N6-(pyridoxal phosphate)lysine" evidence="1">
    <location>
        <position position="305"/>
    </location>
</feature>
<organism>
    <name type="scientific">Narcissus pseudonarcissus</name>
    <name type="common">Daffodil</name>
    <dbReference type="NCBI Taxonomy" id="39639"/>
    <lineage>
        <taxon>Eukaryota</taxon>
        <taxon>Viridiplantae</taxon>
        <taxon>Streptophyta</taxon>
        <taxon>Embryophyta</taxon>
        <taxon>Tracheophyta</taxon>
        <taxon>Spermatophyta</taxon>
        <taxon>Magnoliopsida</taxon>
        <taxon>Liliopsida</taxon>
        <taxon>Asparagales</taxon>
        <taxon>Amaryllidaceae</taxon>
        <taxon>Amaryllidoideae</taxon>
        <taxon>Narcissus</taxon>
    </lineage>
</organism>